<sequence length="487" mass="55879">MSLKIYNTLTGKKEDFAPIKPGEVKIYTCGVTVYDYNHVGHGRSLIVFDMIRRYLRYLGYNVIFVRNFTDVDDKIINRAKNECLPFSVISDKFIKEYFDDAEKFRIEPADIEPRVTTHIPDIINFIQKLVDAGYAYEADGDVYFSVRKFKEYGKLSKRSIDELLAGARIEPGEKKKDPLDFALWKSAKAGEPYWESPWGKGRPGWHTECCAMIFKHLGETIDIHGGGLDLTFPHHENEIAQAEALTGKPFARYWIHNGLVTVNGQKMSKSLGNYIKLKEIYSKYEPDILRLLVLSVHYRSPLDFSWDKMEETKKAYERLKNAIEEAEVLNKLPIDENFEGDLYNAIQKAQSGFYSAMSDDFNTPEALASLFGLVREMNILRDKAIKHGGISKKAIESYKEAAKTLHDIGRDIFGLFDSLQPCIKQEEVKVKEKEESINEDLIQVLIEAREKARKEKQFTIADLIRDKLAEKGIILEDAPFGTKWKKA</sequence>
<feature type="chain" id="PRO_1000090877" description="Cysteine--tRNA ligase">
    <location>
        <begin position="1"/>
        <end position="487"/>
    </location>
</feature>
<feature type="short sequence motif" description="'HIGH' region">
    <location>
        <begin position="31"/>
        <end position="41"/>
    </location>
</feature>
<feature type="short sequence motif" description="'KMSKS' region">
    <location>
        <begin position="266"/>
        <end position="270"/>
    </location>
</feature>
<feature type="binding site" evidence="1">
    <location>
        <position position="29"/>
    </location>
    <ligand>
        <name>Zn(2+)</name>
        <dbReference type="ChEBI" id="CHEBI:29105"/>
    </ligand>
</feature>
<feature type="binding site" evidence="1">
    <location>
        <position position="209"/>
    </location>
    <ligand>
        <name>Zn(2+)</name>
        <dbReference type="ChEBI" id="CHEBI:29105"/>
    </ligand>
</feature>
<feature type="binding site" evidence="1">
    <location>
        <position position="234"/>
    </location>
    <ligand>
        <name>Zn(2+)</name>
        <dbReference type="ChEBI" id="CHEBI:29105"/>
    </ligand>
</feature>
<feature type="binding site" evidence="1">
    <location>
        <position position="238"/>
    </location>
    <ligand>
        <name>Zn(2+)</name>
        <dbReference type="ChEBI" id="CHEBI:29105"/>
    </ligand>
</feature>
<feature type="binding site" evidence="1">
    <location>
        <position position="269"/>
    </location>
    <ligand>
        <name>ATP</name>
        <dbReference type="ChEBI" id="CHEBI:30616"/>
    </ligand>
</feature>
<gene>
    <name evidence="1" type="primary">cysS</name>
    <name type="ordered locus">SYO3AOP1_1589</name>
</gene>
<organism>
    <name type="scientific">Sulfurihydrogenibium sp. (strain YO3AOP1)</name>
    <dbReference type="NCBI Taxonomy" id="436114"/>
    <lineage>
        <taxon>Bacteria</taxon>
        <taxon>Pseudomonadati</taxon>
        <taxon>Aquificota</taxon>
        <taxon>Aquificia</taxon>
        <taxon>Aquificales</taxon>
        <taxon>Hydrogenothermaceae</taxon>
        <taxon>Sulfurihydrogenibium</taxon>
    </lineage>
</organism>
<name>SYC_SULSY</name>
<dbReference type="EC" id="6.1.1.16" evidence="1"/>
<dbReference type="EMBL" id="CP001080">
    <property type="protein sequence ID" value="ACD67187.1"/>
    <property type="molecule type" value="Genomic_DNA"/>
</dbReference>
<dbReference type="RefSeq" id="WP_012460243.1">
    <property type="nucleotide sequence ID" value="NC_010730.1"/>
</dbReference>
<dbReference type="SMR" id="B2V6B4"/>
<dbReference type="STRING" id="436114.SYO3AOP1_1589"/>
<dbReference type="KEGG" id="sul:SYO3AOP1_1589"/>
<dbReference type="eggNOG" id="COG0215">
    <property type="taxonomic scope" value="Bacteria"/>
</dbReference>
<dbReference type="HOGENOM" id="CLU_013528_0_1_0"/>
<dbReference type="GO" id="GO:0005829">
    <property type="term" value="C:cytosol"/>
    <property type="evidence" value="ECO:0007669"/>
    <property type="project" value="TreeGrafter"/>
</dbReference>
<dbReference type="GO" id="GO:0005524">
    <property type="term" value="F:ATP binding"/>
    <property type="evidence" value="ECO:0007669"/>
    <property type="project" value="UniProtKB-UniRule"/>
</dbReference>
<dbReference type="GO" id="GO:0004817">
    <property type="term" value="F:cysteine-tRNA ligase activity"/>
    <property type="evidence" value="ECO:0007669"/>
    <property type="project" value="UniProtKB-UniRule"/>
</dbReference>
<dbReference type="GO" id="GO:0008270">
    <property type="term" value="F:zinc ion binding"/>
    <property type="evidence" value="ECO:0007669"/>
    <property type="project" value="UniProtKB-UniRule"/>
</dbReference>
<dbReference type="GO" id="GO:0006423">
    <property type="term" value="P:cysteinyl-tRNA aminoacylation"/>
    <property type="evidence" value="ECO:0007669"/>
    <property type="project" value="UniProtKB-UniRule"/>
</dbReference>
<dbReference type="CDD" id="cd00672">
    <property type="entry name" value="CysRS_core"/>
    <property type="match status" value="1"/>
</dbReference>
<dbReference type="FunFam" id="3.40.50.620:FF:000009">
    <property type="entry name" value="Cysteine--tRNA ligase"/>
    <property type="match status" value="1"/>
</dbReference>
<dbReference type="Gene3D" id="1.20.120.1910">
    <property type="entry name" value="Cysteine-tRNA ligase, C-terminal anti-codon recognition domain"/>
    <property type="match status" value="1"/>
</dbReference>
<dbReference type="Gene3D" id="3.40.50.620">
    <property type="entry name" value="HUPs"/>
    <property type="match status" value="1"/>
</dbReference>
<dbReference type="HAMAP" id="MF_00041">
    <property type="entry name" value="Cys_tRNA_synth"/>
    <property type="match status" value="1"/>
</dbReference>
<dbReference type="InterPro" id="IPR015803">
    <property type="entry name" value="Cys-tRNA-ligase"/>
</dbReference>
<dbReference type="InterPro" id="IPR015273">
    <property type="entry name" value="Cys-tRNA-synt_Ia_DALR"/>
</dbReference>
<dbReference type="InterPro" id="IPR024909">
    <property type="entry name" value="Cys-tRNA/MSH_ligase"/>
</dbReference>
<dbReference type="InterPro" id="IPR014729">
    <property type="entry name" value="Rossmann-like_a/b/a_fold"/>
</dbReference>
<dbReference type="InterPro" id="IPR032678">
    <property type="entry name" value="tRNA-synt_1_cat_dom"/>
</dbReference>
<dbReference type="InterPro" id="IPR009080">
    <property type="entry name" value="tRNAsynth_Ia_anticodon-bd"/>
</dbReference>
<dbReference type="NCBIfam" id="TIGR00435">
    <property type="entry name" value="cysS"/>
    <property type="match status" value="1"/>
</dbReference>
<dbReference type="PANTHER" id="PTHR10890:SF3">
    <property type="entry name" value="CYSTEINE--TRNA LIGASE, CYTOPLASMIC"/>
    <property type="match status" value="1"/>
</dbReference>
<dbReference type="PANTHER" id="PTHR10890">
    <property type="entry name" value="CYSTEINYL-TRNA SYNTHETASE"/>
    <property type="match status" value="1"/>
</dbReference>
<dbReference type="Pfam" id="PF09190">
    <property type="entry name" value="DALR_2"/>
    <property type="match status" value="1"/>
</dbReference>
<dbReference type="Pfam" id="PF01406">
    <property type="entry name" value="tRNA-synt_1e"/>
    <property type="match status" value="1"/>
</dbReference>
<dbReference type="PRINTS" id="PR00983">
    <property type="entry name" value="TRNASYNTHCYS"/>
</dbReference>
<dbReference type="SMART" id="SM00840">
    <property type="entry name" value="DALR_2"/>
    <property type="match status" value="1"/>
</dbReference>
<dbReference type="SUPFAM" id="SSF47323">
    <property type="entry name" value="Anticodon-binding domain of a subclass of class I aminoacyl-tRNA synthetases"/>
    <property type="match status" value="1"/>
</dbReference>
<dbReference type="SUPFAM" id="SSF52374">
    <property type="entry name" value="Nucleotidylyl transferase"/>
    <property type="match status" value="1"/>
</dbReference>
<reference key="1">
    <citation type="journal article" date="2009" name="J. Bacteriol.">
        <title>Complete and draft genome sequences of six members of the Aquificales.</title>
        <authorList>
            <person name="Reysenbach A.-L."/>
            <person name="Hamamura N."/>
            <person name="Podar M."/>
            <person name="Griffiths E."/>
            <person name="Ferreira S."/>
            <person name="Hochstein R."/>
            <person name="Heidelberg J."/>
            <person name="Johnson J."/>
            <person name="Mead D."/>
            <person name="Pohorille A."/>
            <person name="Sarmiento M."/>
            <person name="Schweighofer K."/>
            <person name="Seshadri R."/>
            <person name="Voytek M.A."/>
        </authorList>
    </citation>
    <scope>NUCLEOTIDE SEQUENCE [LARGE SCALE GENOMIC DNA]</scope>
    <source>
        <strain>YO3AOP1</strain>
    </source>
</reference>
<comment type="catalytic activity">
    <reaction evidence="1">
        <text>tRNA(Cys) + L-cysteine + ATP = L-cysteinyl-tRNA(Cys) + AMP + diphosphate</text>
        <dbReference type="Rhea" id="RHEA:17773"/>
        <dbReference type="Rhea" id="RHEA-COMP:9661"/>
        <dbReference type="Rhea" id="RHEA-COMP:9679"/>
        <dbReference type="ChEBI" id="CHEBI:30616"/>
        <dbReference type="ChEBI" id="CHEBI:33019"/>
        <dbReference type="ChEBI" id="CHEBI:35235"/>
        <dbReference type="ChEBI" id="CHEBI:78442"/>
        <dbReference type="ChEBI" id="CHEBI:78517"/>
        <dbReference type="ChEBI" id="CHEBI:456215"/>
        <dbReference type="EC" id="6.1.1.16"/>
    </reaction>
</comment>
<comment type="cofactor">
    <cofactor evidence="1">
        <name>Zn(2+)</name>
        <dbReference type="ChEBI" id="CHEBI:29105"/>
    </cofactor>
    <text evidence="1">Binds 1 zinc ion per subunit.</text>
</comment>
<comment type="subunit">
    <text evidence="1">Monomer.</text>
</comment>
<comment type="subcellular location">
    <subcellularLocation>
        <location evidence="1">Cytoplasm</location>
    </subcellularLocation>
</comment>
<comment type="similarity">
    <text evidence="1">Belongs to the class-I aminoacyl-tRNA synthetase family.</text>
</comment>
<proteinExistence type="inferred from homology"/>
<protein>
    <recommendedName>
        <fullName evidence="1">Cysteine--tRNA ligase</fullName>
        <ecNumber evidence="1">6.1.1.16</ecNumber>
    </recommendedName>
    <alternativeName>
        <fullName evidence="1">Cysteinyl-tRNA synthetase</fullName>
        <shortName evidence="1">CysRS</shortName>
    </alternativeName>
</protein>
<keyword id="KW-0030">Aminoacyl-tRNA synthetase</keyword>
<keyword id="KW-0067">ATP-binding</keyword>
<keyword id="KW-0963">Cytoplasm</keyword>
<keyword id="KW-0436">Ligase</keyword>
<keyword id="KW-0479">Metal-binding</keyword>
<keyword id="KW-0547">Nucleotide-binding</keyword>
<keyword id="KW-0648">Protein biosynthesis</keyword>
<keyword id="KW-0862">Zinc</keyword>
<accession>B2V6B4</accession>
<evidence type="ECO:0000255" key="1">
    <source>
        <dbReference type="HAMAP-Rule" id="MF_00041"/>
    </source>
</evidence>